<dbReference type="EC" id="1.1.99.1" evidence="1"/>
<dbReference type="EC" id="1.2.1.8" evidence="1"/>
<dbReference type="EMBL" id="CP000628">
    <property type="protein sequence ID" value="ACM25808.1"/>
    <property type="molecule type" value="Genomic_DNA"/>
</dbReference>
<dbReference type="RefSeq" id="WP_012651091.1">
    <property type="nucleotide sequence ID" value="NC_011985.1"/>
</dbReference>
<dbReference type="SMR" id="B9JBA2"/>
<dbReference type="STRING" id="311403.Arad_1351"/>
<dbReference type="KEGG" id="ara:Arad_1351"/>
<dbReference type="eggNOG" id="COG2303">
    <property type="taxonomic scope" value="Bacteria"/>
</dbReference>
<dbReference type="HOGENOM" id="CLU_002865_7_1_5"/>
<dbReference type="UniPathway" id="UPA00529">
    <property type="reaction ID" value="UER00385"/>
</dbReference>
<dbReference type="Proteomes" id="UP000001600">
    <property type="component" value="Chromosome 1"/>
</dbReference>
<dbReference type="GO" id="GO:0008802">
    <property type="term" value="F:betaine-aldehyde dehydrogenase (NAD+) activity"/>
    <property type="evidence" value="ECO:0007669"/>
    <property type="project" value="UniProtKB-EC"/>
</dbReference>
<dbReference type="GO" id="GO:0008812">
    <property type="term" value="F:choline dehydrogenase activity"/>
    <property type="evidence" value="ECO:0007669"/>
    <property type="project" value="UniProtKB-UniRule"/>
</dbReference>
<dbReference type="GO" id="GO:0050660">
    <property type="term" value="F:flavin adenine dinucleotide binding"/>
    <property type="evidence" value="ECO:0007669"/>
    <property type="project" value="InterPro"/>
</dbReference>
<dbReference type="GO" id="GO:0019285">
    <property type="term" value="P:glycine betaine biosynthetic process from choline"/>
    <property type="evidence" value="ECO:0007669"/>
    <property type="project" value="UniProtKB-UniRule"/>
</dbReference>
<dbReference type="Gene3D" id="3.50.50.60">
    <property type="entry name" value="FAD/NAD(P)-binding domain"/>
    <property type="match status" value="1"/>
</dbReference>
<dbReference type="Gene3D" id="3.30.560.10">
    <property type="entry name" value="Glucose Oxidase, domain 3"/>
    <property type="match status" value="1"/>
</dbReference>
<dbReference type="HAMAP" id="MF_00750">
    <property type="entry name" value="Choline_dehydrogen"/>
    <property type="match status" value="1"/>
</dbReference>
<dbReference type="InterPro" id="IPR011533">
    <property type="entry name" value="BetA"/>
</dbReference>
<dbReference type="InterPro" id="IPR036188">
    <property type="entry name" value="FAD/NAD-bd_sf"/>
</dbReference>
<dbReference type="InterPro" id="IPR012132">
    <property type="entry name" value="GMC_OxRdtase"/>
</dbReference>
<dbReference type="InterPro" id="IPR000172">
    <property type="entry name" value="GMC_OxRdtase_N"/>
</dbReference>
<dbReference type="InterPro" id="IPR007867">
    <property type="entry name" value="GMC_OxRtase_C"/>
</dbReference>
<dbReference type="NCBIfam" id="TIGR01810">
    <property type="entry name" value="betA"/>
    <property type="match status" value="1"/>
</dbReference>
<dbReference type="NCBIfam" id="NF002550">
    <property type="entry name" value="PRK02106.1"/>
    <property type="match status" value="1"/>
</dbReference>
<dbReference type="PANTHER" id="PTHR11552:SF147">
    <property type="entry name" value="CHOLINE DEHYDROGENASE, MITOCHONDRIAL"/>
    <property type="match status" value="1"/>
</dbReference>
<dbReference type="PANTHER" id="PTHR11552">
    <property type="entry name" value="GLUCOSE-METHANOL-CHOLINE GMC OXIDOREDUCTASE"/>
    <property type="match status" value="1"/>
</dbReference>
<dbReference type="Pfam" id="PF05199">
    <property type="entry name" value="GMC_oxred_C"/>
    <property type="match status" value="1"/>
</dbReference>
<dbReference type="Pfam" id="PF00732">
    <property type="entry name" value="GMC_oxred_N"/>
    <property type="match status" value="1"/>
</dbReference>
<dbReference type="PIRSF" id="PIRSF000137">
    <property type="entry name" value="Alcohol_oxidase"/>
    <property type="match status" value="1"/>
</dbReference>
<dbReference type="SUPFAM" id="SSF54373">
    <property type="entry name" value="FAD-linked reductases, C-terminal domain"/>
    <property type="match status" value="1"/>
</dbReference>
<dbReference type="SUPFAM" id="SSF51905">
    <property type="entry name" value="FAD/NAD(P)-binding domain"/>
    <property type="match status" value="1"/>
</dbReference>
<dbReference type="PROSITE" id="PS00623">
    <property type="entry name" value="GMC_OXRED_1"/>
    <property type="match status" value="1"/>
</dbReference>
<dbReference type="PROSITE" id="PS00624">
    <property type="entry name" value="GMC_OXRED_2"/>
    <property type="match status" value="1"/>
</dbReference>
<reference key="1">
    <citation type="journal article" date="2009" name="J. Bacteriol.">
        <title>Genome sequences of three Agrobacterium biovars help elucidate the evolution of multichromosome genomes in bacteria.</title>
        <authorList>
            <person name="Slater S.C."/>
            <person name="Goldman B.S."/>
            <person name="Goodner B."/>
            <person name="Setubal J.C."/>
            <person name="Farrand S.K."/>
            <person name="Nester E.W."/>
            <person name="Burr T.J."/>
            <person name="Banta L."/>
            <person name="Dickerman A.W."/>
            <person name="Paulsen I."/>
            <person name="Otten L."/>
            <person name="Suen G."/>
            <person name="Welch R."/>
            <person name="Almeida N.F."/>
            <person name="Arnold F."/>
            <person name="Burton O.T."/>
            <person name="Du Z."/>
            <person name="Ewing A."/>
            <person name="Godsy E."/>
            <person name="Heisel S."/>
            <person name="Houmiel K.L."/>
            <person name="Jhaveri J."/>
            <person name="Lu J."/>
            <person name="Miller N.M."/>
            <person name="Norton S."/>
            <person name="Chen Q."/>
            <person name="Phoolcharoen W."/>
            <person name="Ohlin V."/>
            <person name="Ondrusek D."/>
            <person name="Pride N."/>
            <person name="Stricklin S.L."/>
            <person name="Sun J."/>
            <person name="Wheeler C."/>
            <person name="Wilson L."/>
            <person name="Zhu H."/>
            <person name="Wood D.W."/>
        </authorList>
    </citation>
    <scope>NUCLEOTIDE SEQUENCE [LARGE SCALE GENOMIC DNA]</scope>
    <source>
        <strain>K84 / ATCC BAA-868</strain>
    </source>
</reference>
<organism>
    <name type="scientific">Rhizobium rhizogenes (strain K84 / ATCC BAA-868)</name>
    <name type="common">Agrobacterium radiobacter</name>
    <dbReference type="NCBI Taxonomy" id="311403"/>
    <lineage>
        <taxon>Bacteria</taxon>
        <taxon>Pseudomonadati</taxon>
        <taxon>Pseudomonadota</taxon>
        <taxon>Alphaproteobacteria</taxon>
        <taxon>Hyphomicrobiales</taxon>
        <taxon>Rhizobiaceae</taxon>
        <taxon>Rhizobium/Agrobacterium group</taxon>
        <taxon>Rhizobium</taxon>
    </lineage>
</organism>
<sequence>MQADFVIIGSGSAGSAMASRLSEDGKHTVIVLEFGGSDVGPFIQMPAALAWPMSMDRYNWGYLSEPEPQLNNRRITAPRGKVIGGSSSINGMVYVRGHAEDFNRWEELGAQGWAYADVLPYFKRMEHSHGGEEGWRGTDGPLHVRRGDARNPLFHAFIEAGKQAGFEATEDYNGGKQEGFGLMEQTTWMGRRWSAATAYLKPALKRPNVELIRCFARKVVIENGRATGVEIERGGKIEIVKANSEVIVSASSFNSPKLLMLSGIGPGQHLQEMGIEVKIDRPGVGANLQDHMEFYFQQTSLKPVSLYSWLPWYMQGIVGAQWMFFKSGLGTSNQFEACAFLRSAPGVKQPDIQYHFLPVAISYDGKAAAKSHGFQAHVGYNLSKSRGAVTLRSSDPKADPVIRFNYMSHPEDWEKFRHCVRLTREIFGQKAFDDYRGPEIQPGPDVQTDDQIDAFLREHLESAYHPCGTCKMGSKDDPMAVVDPDTRVIGVEGLRVADSSIFPSLTYGNLNGPSIMTGEKAADHILGKPRLARSNQEPWINPRWEVSDR</sequence>
<evidence type="ECO:0000255" key="1">
    <source>
        <dbReference type="HAMAP-Rule" id="MF_00750"/>
    </source>
</evidence>
<keyword id="KW-0274">FAD</keyword>
<keyword id="KW-0285">Flavoprotein</keyword>
<keyword id="KW-0520">NAD</keyword>
<keyword id="KW-0560">Oxidoreductase</keyword>
<feature type="chain" id="PRO_1000148349" description="Oxygen-dependent choline dehydrogenase">
    <location>
        <begin position="1"/>
        <end position="549"/>
    </location>
</feature>
<feature type="active site" description="Proton acceptor" evidence="1">
    <location>
        <position position="465"/>
    </location>
</feature>
<feature type="binding site" evidence="1">
    <location>
        <begin position="4"/>
        <end position="33"/>
    </location>
    <ligand>
        <name>FAD</name>
        <dbReference type="ChEBI" id="CHEBI:57692"/>
    </ligand>
</feature>
<accession>B9JBA2</accession>
<proteinExistence type="inferred from homology"/>
<name>BETA_RHIR8</name>
<gene>
    <name evidence="1" type="primary">betA</name>
    <name type="ordered locus">Arad_1351</name>
</gene>
<protein>
    <recommendedName>
        <fullName evidence="1">Oxygen-dependent choline dehydrogenase</fullName>
        <shortName evidence="1">CDH</shortName>
        <shortName evidence="1">CHD</shortName>
        <ecNumber evidence="1">1.1.99.1</ecNumber>
    </recommendedName>
    <alternativeName>
        <fullName evidence="1">Betaine aldehyde dehydrogenase</fullName>
        <shortName evidence="1">BADH</shortName>
        <ecNumber evidence="1">1.2.1.8</ecNumber>
    </alternativeName>
</protein>
<comment type="function">
    <text evidence="1">Involved in the biosynthesis of the osmoprotectant glycine betaine. Catalyzes the oxidation of choline to betaine aldehyde and betaine aldehyde to glycine betaine at the same rate.</text>
</comment>
<comment type="catalytic activity">
    <reaction evidence="1">
        <text>choline + A = betaine aldehyde + AH2</text>
        <dbReference type="Rhea" id="RHEA:17433"/>
        <dbReference type="ChEBI" id="CHEBI:13193"/>
        <dbReference type="ChEBI" id="CHEBI:15354"/>
        <dbReference type="ChEBI" id="CHEBI:15710"/>
        <dbReference type="ChEBI" id="CHEBI:17499"/>
        <dbReference type="EC" id="1.1.99.1"/>
    </reaction>
</comment>
<comment type="catalytic activity">
    <reaction evidence="1">
        <text>betaine aldehyde + NAD(+) + H2O = glycine betaine + NADH + 2 H(+)</text>
        <dbReference type="Rhea" id="RHEA:15305"/>
        <dbReference type="ChEBI" id="CHEBI:15377"/>
        <dbReference type="ChEBI" id="CHEBI:15378"/>
        <dbReference type="ChEBI" id="CHEBI:15710"/>
        <dbReference type="ChEBI" id="CHEBI:17750"/>
        <dbReference type="ChEBI" id="CHEBI:57540"/>
        <dbReference type="ChEBI" id="CHEBI:57945"/>
        <dbReference type="EC" id="1.2.1.8"/>
    </reaction>
</comment>
<comment type="cofactor">
    <cofactor evidence="1">
        <name>FAD</name>
        <dbReference type="ChEBI" id="CHEBI:57692"/>
    </cofactor>
</comment>
<comment type="pathway">
    <text evidence="1">Amine and polyamine biosynthesis; betaine biosynthesis via choline pathway; betaine aldehyde from choline (cytochrome c reductase route): step 1/1.</text>
</comment>
<comment type="similarity">
    <text evidence="1">Belongs to the GMC oxidoreductase family.</text>
</comment>